<comment type="function">
    <text evidence="1">Contacts the emerging nascent chain on the ribosome.</text>
</comment>
<comment type="subunit">
    <text evidence="1">Homodimer. Interacts with the ribosome. Binds ribosomal RNA.</text>
</comment>
<comment type="similarity">
    <text evidence="1">Belongs to the NAC-alpha family.</text>
</comment>
<name>NAC_METMP</name>
<feature type="chain" id="PRO_0000135602" description="Nascent polypeptide-associated complex protein">
    <location>
        <begin position="1"/>
        <end position="126"/>
    </location>
</feature>
<feature type="domain" description="NAC-A/B" evidence="1">
    <location>
        <begin position="10"/>
        <end position="77"/>
    </location>
</feature>
<keyword id="KW-0653">Protein transport</keyword>
<keyword id="KW-1185">Reference proteome</keyword>
<keyword id="KW-0694">RNA-binding</keyword>
<keyword id="KW-0813">Transport</keyword>
<accession>Q6M0I0</accession>
<sequence>MFPGGGKFNPRMMKQMQKMMKDFGMDAEDLKAVKVTIELEDKLLVFEKPKVQVMDMLGNKTYSITGKAKKVAKEEEKIEDVEVKVEVTEEDIDMVSNQCGVSKEEAKKALEEVNGDLAEAILKLGN</sequence>
<reference key="1">
    <citation type="journal article" date="2004" name="J. Bacteriol.">
        <title>Complete genome sequence of the genetically tractable hydrogenotrophic methanogen Methanococcus maripaludis.</title>
        <authorList>
            <person name="Hendrickson E.L."/>
            <person name="Kaul R."/>
            <person name="Zhou Y."/>
            <person name="Bovee D."/>
            <person name="Chapman P."/>
            <person name="Chung J."/>
            <person name="Conway de Macario E."/>
            <person name="Dodsworth J.A."/>
            <person name="Gillett W."/>
            <person name="Graham D.E."/>
            <person name="Hackett M."/>
            <person name="Haydock A.K."/>
            <person name="Kang A."/>
            <person name="Land M.L."/>
            <person name="Levy R."/>
            <person name="Lie T.J."/>
            <person name="Major T.A."/>
            <person name="Moore B.C."/>
            <person name="Porat I."/>
            <person name="Palmeiri A."/>
            <person name="Rouse G."/>
            <person name="Saenphimmachak C."/>
            <person name="Soell D."/>
            <person name="Van Dien S."/>
            <person name="Wang T."/>
            <person name="Whitman W.B."/>
            <person name="Xia Q."/>
            <person name="Zhang Y."/>
            <person name="Larimer F.W."/>
            <person name="Olson M.V."/>
            <person name="Leigh J.A."/>
        </authorList>
    </citation>
    <scope>NUCLEOTIDE SEQUENCE [LARGE SCALE GENOMIC DNA]</scope>
    <source>
        <strain>DSM 14266 / JCM 13030 / NBRC 101832 / S2 / LL</strain>
    </source>
</reference>
<dbReference type="EMBL" id="BX950229">
    <property type="protein sequence ID" value="CAF29846.1"/>
    <property type="molecule type" value="Genomic_DNA"/>
</dbReference>
<dbReference type="RefSeq" id="WP_011170234.1">
    <property type="nucleotide sequence ID" value="NC_005791.1"/>
</dbReference>
<dbReference type="SMR" id="Q6M0I0"/>
<dbReference type="STRING" id="267377.MMP0290"/>
<dbReference type="EnsemblBacteria" id="CAF29846">
    <property type="protein sequence ID" value="CAF29846"/>
    <property type="gene ID" value="MMP0290"/>
</dbReference>
<dbReference type="GeneID" id="10981723"/>
<dbReference type="GeneID" id="2761263"/>
<dbReference type="KEGG" id="mmp:MMP0290"/>
<dbReference type="PATRIC" id="fig|267377.15.peg.293"/>
<dbReference type="eggNOG" id="arCOG04061">
    <property type="taxonomic scope" value="Archaea"/>
</dbReference>
<dbReference type="HOGENOM" id="CLU_146475_1_0_2"/>
<dbReference type="OrthoDB" id="53273at2157"/>
<dbReference type="Proteomes" id="UP000000590">
    <property type="component" value="Chromosome"/>
</dbReference>
<dbReference type="GO" id="GO:0003723">
    <property type="term" value="F:RNA binding"/>
    <property type="evidence" value="ECO:0007669"/>
    <property type="project" value="UniProtKB-UniRule"/>
</dbReference>
<dbReference type="GO" id="GO:0015031">
    <property type="term" value="P:protein transport"/>
    <property type="evidence" value="ECO:0007669"/>
    <property type="project" value="UniProtKB-UniRule"/>
</dbReference>
<dbReference type="CDD" id="cd14359">
    <property type="entry name" value="UBA_AeNAC"/>
    <property type="match status" value="1"/>
</dbReference>
<dbReference type="Gene3D" id="1.10.8.10">
    <property type="entry name" value="DNA helicase RuvA subunit, C-terminal domain"/>
    <property type="match status" value="1"/>
</dbReference>
<dbReference type="Gene3D" id="2.20.70.30">
    <property type="entry name" value="Nascent polypeptide-associated complex domain"/>
    <property type="match status" value="1"/>
</dbReference>
<dbReference type="HAMAP" id="MF_00814">
    <property type="entry name" value="NAC_arch"/>
    <property type="match status" value="1"/>
</dbReference>
<dbReference type="InterPro" id="IPR044034">
    <property type="entry name" value="NAC-like_UBA"/>
</dbReference>
<dbReference type="InterPro" id="IPR038187">
    <property type="entry name" value="NAC_A/B_dom_sf"/>
</dbReference>
<dbReference type="InterPro" id="IPR005231">
    <property type="entry name" value="NAC_arc"/>
</dbReference>
<dbReference type="InterPro" id="IPR002715">
    <property type="entry name" value="Nas_poly-pep-assoc_cplx_dom"/>
</dbReference>
<dbReference type="InterPro" id="IPR009060">
    <property type="entry name" value="UBA-like_sf"/>
</dbReference>
<dbReference type="NCBIfam" id="TIGR00264">
    <property type="entry name" value="archaeal-type nascent polypeptide-associated complex protein"/>
    <property type="match status" value="1"/>
</dbReference>
<dbReference type="Pfam" id="PF01849">
    <property type="entry name" value="NAC"/>
    <property type="match status" value="1"/>
</dbReference>
<dbReference type="Pfam" id="PF19026">
    <property type="entry name" value="UBA_HYPK"/>
    <property type="match status" value="1"/>
</dbReference>
<dbReference type="SMART" id="SM01407">
    <property type="entry name" value="NAC"/>
    <property type="match status" value="1"/>
</dbReference>
<dbReference type="SUPFAM" id="SSF46934">
    <property type="entry name" value="UBA-like"/>
    <property type="match status" value="1"/>
</dbReference>
<dbReference type="PROSITE" id="PS51151">
    <property type="entry name" value="NAC_AB"/>
    <property type="match status" value="1"/>
</dbReference>
<evidence type="ECO:0000255" key="1">
    <source>
        <dbReference type="HAMAP-Rule" id="MF_00814"/>
    </source>
</evidence>
<protein>
    <recommendedName>
        <fullName evidence="1">Nascent polypeptide-associated complex protein</fullName>
    </recommendedName>
</protein>
<organism>
    <name type="scientific">Methanococcus maripaludis (strain DSM 14266 / JCM 13030 / NBRC 101832 / S2 / LL)</name>
    <dbReference type="NCBI Taxonomy" id="267377"/>
    <lineage>
        <taxon>Archaea</taxon>
        <taxon>Methanobacteriati</taxon>
        <taxon>Methanobacteriota</taxon>
        <taxon>Methanomada group</taxon>
        <taxon>Methanococci</taxon>
        <taxon>Methanococcales</taxon>
        <taxon>Methanococcaceae</taxon>
        <taxon>Methanococcus</taxon>
    </lineage>
</organism>
<gene>
    <name evidence="1" type="primary">nac</name>
    <name type="ordered locus">MMP0290</name>
</gene>
<proteinExistence type="inferred from homology"/>